<evidence type="ECO:0000255" key="1"/>
<evidence type="ECO:0000269" key="2">
    <source>
    </source>
</evidence>
<evidence type="ECO:0000269" key="3">
    <source>
    </source>
</evidence>
<evidence type="ECO:0000269" key="4">
    <source>
    </source>
</evidence>
<evidence type="ECO:0000269" key="5">
    <source>
    </source>
</evidence>
<evidence type="ECO:0000269" key="6">
    <source>
    </source>
</evidence>
<evidence type="ECO:0000305" key="7"/>
<keyword id="KW-0025">Alternative splicing</keyword>
<keyword id="KW-0072">Autophagy</keyword>
<keyword id="KW-0472">Membrane</keyword>
<keyword id="KW-0611">Plant defense</keyword>
<keyword id="KW-1185">Reference proteome</keyword>
<keyword id="KW-0808">Transferase</keyword>
<keyword id="KW-0812">Transmembrane</keyword>
<keyword id="KW-1133">Transmembrane helix</keyword>
<keyword id="KW-0833">Ubl conjugation pathway</keyword>
<name>ATG10_ARATH</name>
<reference key="1">
    <citation type="journal article" date="2000" name="Nature">
        <title>Sequence and analysis of chromosome 3 of the plant Arabidopsis thaliana.</title>
        <authorList>
            <person name="Salanoubat M."/>
            <person name="Lemcke K."/>
            <person name="Rieger M."/>
            <person name="Ansorge W."/>
            <person name="Unseld M."/>
            <person name="Fartmann B."/>
            <person name="Valle G."/>
            <person name="Bloecker H."/>
            <person name="Perez-Alonso M."/>
            <person name="Obermaier B."/>
            <person name="Delseny M."/>
            <person name="Boutry M."/>
            <person name="Grivell L.A."/>
            <person name="Mache R."/>
            <person name="Puigdomenech P."/>
            <person name="De Simone V."/>
            <person name="Choisne N."/>
            <person name="Artiguenave F."/>
            <person name="Robert C."/>
            <person name="Brottier P."/>
            <person name="Wincker P."/>
            <person name="Cattolico L."/>
            <person name="Weissenbach J."/>
            <person name="Saurin W."/>
            <person name="Quetier F."/>
            <person name="Schaefer M."/>
            <person name="Mueller-Auer S."/>
            <person name="Gabel C."/>
            <person name="Fuchs M."/>
            <person name="Benes V."/>
            <person name="Wurmbach E."/>
            <person name="Drzonek H."/>
            <person name="Erfle H."/>
            <person name="Jordan N."/>
            <person name="Bangert S."/>
            <person name="Wiedelmann R."/>
            <person name="Kranz H."/>
            <person name="Voss H."/>
            <person name="Holland R."/>
            <person name="Brandt P."/>
            <person name="Nyakatura G."/>
            <person name="Vezzi A."/>
            <person name="D'Angelo M."/>
            <person name="Pallavicini A."/>
            <person name="Toppo S."/>
            <person name="Simionati B."/>
            <person name="Conrad A."/>
            <person name="Hornischer K."/>
            <person name="Kauer G."/>
            <person name="Loehnert T.-H."/>
            <person name="Nordsiek G."/>
            <person name="Reichelt J."/>
            <person name="Scharfe M."/>
            <person name="Schoen O."/>
            <person name="Bargues M."/>
            <person name="Terol J."/>
            <person name="Climent J."/>
            <person name="Navarro P."/>
            <person name="Collado C."/>
            <person name="Perez-Perez A."/>
            <person name="Ottenwaelder B."/>
            <person name="Duchemin D."/>
            <person name="Cooke R."/>
            <person name="Laudie M."/>
            <person name="Berger-Llauro C."/>
            <person name="Purnelle B."/>
            <person name="Masuy D."/>
            <person name="de Haan M."/>
            <person name="Maarse A.C."/>
            <person name="Alcaraz J.-P."/>
            <person name="Cottet A."/>
            <person name="Casacuberta E."/>
            <person name="Monfort A."/>
            <person name="Argiriou A."/>
            <person name="Flores M."/>
            <person name="Liguori R."/>
            <person name="Vitale D."/>
            <person name="Mannhaupt G."/>
            <person name="Haase D."/>
            <person name="Schoof H."/>
            <person name="Rudd S."/>
            <person name="Zaccaria P."/>
            <person name="Mewes H.-W."/>
            <person name="Mayer K.F.X."/>
            <person name="Kaul S."/>
            <person name="Town C.D."/>
            <person name="Koo H.L."/>
            <person name="Tallon L.J."/>
            <person name="Jenkins J."/>
            <person name="Rooney T."/>
            <person name="Rizzo M."/>
            <person name="Walts A."/>
            <person name="Utterback T."/>
            <person name="Fujii C.Y."/>
            <person name="Shea T.P."/>
            <person name="Creasy T.H."/>
            <person name="Haas B."/>
            <person name="Maiti R."/>
            <person name="Wu D."/>
            <person name="Peterson J."/>
            <person name="Van Aken S."/>
            <person name="Pai G."/>
            <person name="Militscher J."/>
            <person name="Sellers P."/>
            <person name="Gill J.E."/>
            <person name="Feldblyum T.V."/>
            <person name="Preuss D."/>
            <person name="Lin X."/>
            <person name="Nierman W.C."/>
            <person name="Salzberg S.L."/>
            <person name="White O."/>
            <person name="Venter J.C."/>
            <person name="Fraser C.M."/>
            <person name="Kaneko T."/>
            <person name="Nakamura Y."/>
            <person name="Sato S."/>
            <person name="Kato T."/>
            <person name="Asamizu E."/>
            <person name="Sasamoto S."/>
            <person name="Kimura T."/>
            <person name="Idesawa K."/>
            <person name="Kawashima K."/>
            <person name="Kishida Y."/>
            <person name="Kiyokawa C."/>
            <person name="Kohara M."/>
            <person name="Matsumoto M."/>
            <person name="Matsuno A."/>
            <person name="Muraki A."/>
            <person name="Nakayama S."/>
            <person name="Nakazaki N."/>
            <person name="Shinpo S."/>
            <person name="Takeuchi C."/>
            <person name="Wada T."/>
            <person name="Watanabe A."/>
            <person name="Yamada M."/>
            <person name="Yasuda M."/>
            <person name="Tabata S."/>
        </authorList>
    </citation>
    <scope>NUCLEOTIDE SEQUENCE [LARGE SCALE GENOMIC DNA]</scope>
    <source>
        <strain>cv. Columbia</strain>
    </source>
</reference>
<reference key="2">
    <citation type="journal article" date="2017" name="Plant J.">
        <title>Araport11: a complete reannotation of the Arabidopsis thaliana reference genome.</title>
        <authorList>
            <person name="Cheng C.Y."/>
            <person name="Krishnakumar V."/>
            <person name="Chan A.P."/>
            <person name="Thibaud-Nissen F."/>
            <person name="Schobel S."/>
            <person name="Town C.D."/>
        </authorList>
    </citation>
    <scope>GENOME REANNOTATION</scope>
    <source>
        <strain>cv. Columbia</strain>
    </source>
</reference>
<reference key="3">
    <citation type="journal article" date="2003" name="Science">
        <title>Empirical analysis of transcriptional activity in the Arabidopsis genome.</title>
        <authorList>
            <person name="Yamada K."/>
            <person name="Lim J."/>
            <person name="Dale J.M."/>
            <person name="Chen H."/>
            <person name="Shinn P."/>
            <person name="Palm C.J."/>
            <person name="Southwick A.M."/>
            <person name="Wu H.C."/>
            <person name="Kim C.J."/>
            <person name="Nguyen M."/>
            <person name="Pham P.K."/>
            <person name="Cheuk R.F."/>
            <person name="Karlin-Newmann G."/>
            <person name="Liu S.X."/>
            <person name="Lam B."/>
            <person name="Sakano H."/>
            <person name="Wu T."/>
            <person name="Yu G."/>
            <person name="Miranda M."/>
            <person name="Quach H.L."/>
            <person name="Tripp M."/>
            <person name="Chang C.H."/>
            <person name="Lee J.M."/>
            <person name="Toriumi M.J."/>
            <person name="Chan M.M."/>
            <person name="Tang C.C."/>
            <person name="Onodera C.S."/>
            <person name="Deng J.M."/>
            <person name="Akiyama K."/>
            <person name="Ansari Y."/>
            <person name="Arakawa T."/>
            <person name="Banh J."/>
            <person name="Banno F."/>
            <person name="Bowser L."/>
            <person name="Brooks S.Y."/>
            <person name="Carninci P."/>
            <person name="Chao Q."/>
            <person name="Choy N."/>
            <person name="Enju A."/>
            <person name="Goldsmith A.D."/>
            <person name="Gurjal M."/>
            <person name="Hansen N.F."/>
            <person name="Hayashizaki Y."/>
            <person name="Johnson-Hopson C."/>
            <person name="Hsuan V.W."/>
            <person name="Iida K."/>
            <person name="Karnes M."/>
            <person name="Khan S."/>
            <person name="Koesema E."/>
            <person name="Ishida J."/>
            <person name="Jiang P.X."/>
            <person name="Jones T."/>
            <person name="Kawai J."/>
            <person name="Kamiya A."/>
            <person name="Meyers C."/>
            <person name="Nakajima M."/>
            <person name="Narusaka M."/>
            <person name="Seki M."/>
            <person name="Sakurai T."/>
            <person name="Satou M."/>
            <person name="Tamse R."/>
            <person name="Vaysberg M."/>
            <person name="Wallender E.K."/>
            <person name="Wong C."/>
            <person name="Yamamura Y."/>
            <person name="Yuan S."/>
            <person name="Shinozaki K."/>
            <person name="Davis R.W."/>
            <person name="Theologis A."/>
            <person name="Ecker J.R."/>
        </authorList>
    </citation>
    <scope>NUCLEOTIDE SEQUENCE [LARGE SCALE MRNA] (ISOFORM 1)</scope>
    <source>
        <strain>cv. Columbia</strain>
    </source>
</reference>
<reference key="4">
    <citation type="journal article" date="2008" name="Genetics">
        <title>The ATG12-conjugating enzyme ATG10 is essential for autophagic vesicle formation in Arabidopsis thaliana.</title>
        <authorList>
            <person name="Phillips A.R."/>
            <person name="Suttangkakul A."/>
            <person name="Vierstra R.D."/>
        </authorList>
    </citation>
    <scope>FUNCTION</scope>
    <scope>DISRUPTION PHENOTYPE</scope>
    <source>
        <strain>cv. Columbia</strain>
    </source>
</reference>
<reference key="5">
    <citation type="journal article" date="2010" name="Mol. Plant">
        <title>The formation of anthocyanic vacuolar inclusions in Arabidopsis thaliana and implications for the sequestration of anthocyanin pigments.</title>
        <authorList>
            <person name="Pourcel L."/>
            <person name="Irani N.G."/>
            <person name="Lu Y."/>
            <person name="Riedl K."/>
            <person name="Schwartz S."/>
            <person name="Grotewold E."/>
        </authorList>
    </citation>
    <scope>FUNCTION</scope>
    <scope>DISRUPTION PHENOTYPE</scope>
</reference>
<reference key="6">
    <citation type="journal article" date="2011" name="Plant J.">
        <title>Autophagy differentially controls plant basal immunity to biotrophic and necrotrophic pathogens.</title>
        <authorList>
            <person name="Lenz H.D."/>
            <person name="Haller E."/>
            <person name="Melzer E."/>
            <person name="Kober K."/>
            <person name="Wurster K."/>
            <person name="Stahl M."/>
            <person name="Bassham D.C."/>
            <person name="Vierstra R.D."/>
            <person name="Parker J.E."/>
            <person name="Bautor J."/>
            <person name="Molina A."/>
            <person name="Escudero V."/>
            <person name="Shindo T."/>
            <person name="van der Hoorn R.A."/>
            <person name="Gust A.A."/>
            <person name="Nuernberger T."/>
        </authorList>
    </citation>
    <scope>FUNCTION IN PLANT DEFENSE</scope>
    <scope>DISRUPTION PHENOTYPE</scope>
    <source>
        <strain>cv. Columbia</strain>
    </source>
</reference>
<reference key="7">
    <citation type="journal article" date="2011" name="Plant J.">
        <title>A critical role of autophagy in plant resistance to necrotrophic fungal pathogens.</title>
        <authorList>
            <person name="Lai Z."/>
            <person name="Wang F."/>
            <person name="Zheng Z."/>
            <person name="Fan B."/>
            <person name="Chen Z."/>
        </authorList>
    </citation>
    <scope>INDUCTION BY BOTRYTIS CINEREA</scope>
    <source>
        <strain>cv. Columbia</strain>
    </source>
</reference>
<reference key="8">
    <citation type="journal article" date="2011" name="Plant J.">
        <title>ATG2, an autophagy-related protein, negatively affects powdery mildew resistance and mildew-induced cell death in Arabidopsis.</title>
        <authorList>
            <person name="Wang Y."/>
            <person name="Nishimura M.T."/>
            <person name="Zhao T."/>
            <person name="Tang D."/>
        </authorList>
    </citation>
    <scope>FUNCTION IN PLANT DEFENSE</scope>
    <scope>DISRUPTION PHENOTYPE</scope>
    <source>
        <strain>cv. Columbia</strain>
    </source>
</reference>
<comment type="function">
    <text evidence="2 3 4 6">E2-like enzyme involved in autophagy. Acts as an E2-like enzyme that catalyzes the conjugation of ATG12 to ATG5. The ATG12-ATG5 conjugates is required for the formation of autophagic vesicles and for the timely progression of senescence and programmed cell death (PCD). Likely serves as an ATG5-recognition molecule. Confers some resistance to nitrogen and carbon starvation. Is also involved in the formation of anthocyanic vacuolar inclusions (AVI). Promotes an autophagic process that constitutes a pro-survival mechanism by controlling the containment of host tissue-destructive microbial infections during necrotrophic pathogen infection, but negatively controls SA-dependent defenses and basal immunity to bacterial infection during biotrophic infection.</text>
</comment>
<comment type="subcellular location">
    <subcellularLocation>
        <location evidence="7">Membrane</location>
        <topology evidence="7">Single-pass membrane protein</topology>
    </subcellularLocation>
</comment>
<comment type="alternative products">
    <event type="alternative splicing"/>
    <isoform>
        <id>Q8VZ52-1</id>
        <name>1</name>
        <sequence type="displayed"/>
    </isoform>
    <isoform>
        <id>Q8VZ52-2</id>
        <name>2</name>
        <sequence type="described" ref="VSP_053427"/>
    </isoform>
</comment>
<comment type="induction">
    <text evidence="5">Slightly induced upon B.cinerea infection.</text>
</comment>
<comment type="disruption phenotype">
    <text evidence="2 3 4 6">Mutant atg10-1 cannot form the ATG12-ATG5 conjugate and fails to accumulate autophagic bodies inside the vacuole. Plants are hypersensitive to nitrogen and carbon starvation and initiate senescence and programmed cell death (PCD) more quickly. Reduced anthocyanin levels under anthocyanin-inductive conditions. Development of spreading necrosis upon infection with the necrotrophic fungal pathogen, A.brassicicola, which is accompanied by the production of reactive oxygen intermediates and by enhanced hyphal growth. By contrast, in response to the virulent biotrophic phytopathogen, P.syringae pv. tomato, plants exhibit a marked resistance without spreading necrosis. Enhanced powdery mildew (e.g. G.cichoracearum) resistance.</text>
</comment>
<comment type="similarity">
    <text evidence="7">Belongs to the ATG10 family.</text>
</comment>
<organism>
    <name type="scientific">Arabidopsis thaliana</name>
    <name type="common">Mouse-ear cress</name>
    <dbReference type="NCBI Taxonomy" id="3702"/>
    <lineage>
        <taxon>Eukaryota</taxon>
        <taxon>Viridiplantae</taxon>
        <taxon>Streptophyta</taxon>
        <taxon>Embryophyta</taxon>
        <taxon>Tracheophyta</taxon>
        <taxon>Spermatophyta</taxon>
        <taxon>Magnoliopsida</taxon>
        <taxon>eudicotyledons</taxon>
        <taxon>Gunneridae</taxon>
        <taxon>Pentapetalae</taxon>
        <taxon>rosids</taxon>
        <taxon>malvids</taxon>
        <taxon>Brassicales</taxon>
        <taxon>Brassicaceae</taxon>
        <taxon>Camelineae</taxon>
        <taxon>Arabidopsis</taxon>
    </lineage>
</organism>
<protein>
    <recommendedName>
        <fullName>Ubiquitin-like-conjugating enzyme ATG10</fullName>
        <ecNumber>2.3.2.-</ecNumber>
    </recommendedName>
    <alternativeName>
        <fullName>Autophagy-related protein 10</fullName>
        <shortName>AtATG10</shortName>
    </alternativeName>
</protein>
<gene>
    <name type="primary">ATG10</name>
    <name type="ordered locus">At3g07525</name>
    <name type="ORF">F21O3</name>
</gene>
<feature type="chain" id="PRO_0000424379" description="Ubiquitin-like-conjugating enzyme ATG10">
    <location>
        <begin position="1"/>
        <end position="225"/>
    </location>
</feature>
<feature type="transmembrane region" description="Helical" evidence="1">
    <location>
        <begin position="200"/>
        <end position="217"/>
    </location>
</feature>
<feature type="active site" description="Glycyl thioester intermediate" evidence="1">
    <location>
        <position position="178"/>
    </location>
</feature>
<feature type="splice variant" id="VSP_053427" description="In isoform 2." evidence="7">
    <original>K</original>
    <variation>KQ</variation>
    <location>
        <position position="53"/>
    </location>
</feature>
<sequence>MDSAREVSDGRLTVEGFSVASRAFADKWKIHNQSFPPWSWVPLINRTLLVSKKEEGYLSLEKIIILSSLEEEIPEDESLNVATDCLEKEETVDHTILVPTMENEAHYYDFHIVYSASYKVPVLYFRGYCSGGEPLALDVIKKDVPSCSVSLLLESKWTFITQEEHPYLNRPWFKLHPCGTEDWIKLLSQSSSSSGCQMPIVLYLVSWFSVVGQVVGLRIPLEMLN</sequence>
<proteinExistence type="evidence at protein level"/>
<dbReference type="EC" id="2.3.2.-"/>
<dbReference type="EMBL" id="AC009853">
    <property type="status" value="NOT_ANNOTATED_CDS"/>
    <property type="molecule type" value="Genomic_DNA"/>
</dbReference>
<dbReference type="EMBL" id="CP002686">
    <property type="protein sequence ID" value="AEE74555.1"/>
    <property type="molecule type" value="Genomic_DNA"/>
</dbReference>
<dbReference type="EMBL" id="CP002686">
    <property type="protein sequence ID" value="AEE74556.1"/>
    <property type="molecule type" value="Genomic_DNA"/>
</dbReference>
<dbReference type="EMBL" id="AY065244">
    <property type="protein sequence ID" value="AAL38720.1"/>
    <property type="molecule type" value="mRNA"/>
</dbReference>
<dbReference type="EMBL" id="AY142587">
    <property type="protein sequence ID" value="AAN13156.1"/>
    <property type="molecule type" value="mRNA"/>
</dbReference>
<dbReference type="RefSeq" id="NP_850532.1">
    <molecule id="Q8VZ52-1"/>
    <property type="nucleotide sequence ID" value="NM_180201.3"/>
</dbReference>
<dbReference type="RefSeq" id="NP_850533.1">
    <molecule id="Q8VZ52-2"/>
    <property type="nucleotide sequence ID" value="NM_180202.1"/>
</dbReference>
<dbReference type="SMR" id="Q8VZ52"/>
<dbReference type="BioGRID" id="5276">
    <property type="interactions" value="4"/>
</dbReference>
<dbReference type="FunCoup" id="Q8VZ52">
    <property type="interactions" value="962"/>
</dbReference>
<dbReference type="IntAct" id="Q8VZ52">
    <property type="interactions" value="4"/>
</dbReference>
<dbReference type="STRING" id="3702.Q8VZ52"/>
<dbReference type="TCDB" id="9.A.15.3.1">
    <property type="family name" value="the autophagy-related phagophore-formation transporter (apt) family"/>
</dbReference>
<dbReference type="PaxDb" id="3702-AT3G07525.2"/>
<dbReference type="DNASU" id="819941"/>
<dbReference type="EnsemblPlants" id="AT3G07525.1">
    <molecule id="Q8VZ52-1"/>
    <property type="protein sequence ID" value="AT3G07525.1"/>
    <property type="gene ID" value="AT3G07525"/>
</dbReference>
<dbReference type="EnsemblPlants" id="AT3G07525.2">
    <molecule id="Q8VZ52-2"/>
    <property type="protein sequence ID" value="AT3G07525.2"/>
    <property type="gene ID" value="AT3G07525"/>
</dbReference>
<dbReference type="GeneID" id="819941"/>
<dbReference type="Gramene" id="AT3G07525.1">
    <molecule id="Q8VZ52-1"/>
    <property type="protein sequence ID" value="AT3G07525.1"/>
    <property type="gene ID" value="AT3G07525"/>
</dbReference>
<dbReference type="Gramene" id="AT3G07525.2">
    <molecule id="Q8VZ52-2"/>
    <property type="protein sequence ID" value="AT3G07525.2"/>
    <property type="gene ID" value="AT3G07525"/>
</dbReference>
<dbReference type="KEGG" id="ath:AT3G07525"/>
<dbReference type="Araport" id="AT3G07525"/>
<dbReference type="TAIR" id="AT3G07525">
    <property type="gene designation" value="ATG10"/>
</dbReference>
<dbReference type="eggNOG" id="KOG4741">
    <property type="taxonomic scope" value="Eukaryota"/>
</dbReference>
<dbReference type="HOGENOM" id="CLU_072332_3_0_1"/>
<dbReference type="InParanoid" id="Q8VZ52"/>
<dbReference type="OMA" id="DSKWTFI"/>
<dbReference type="OrthoDB" id="4089664at2759"/>
<dbReference type="PhylomeDB" id="Q8VZ52"/>
<dbReference type="PRO" id="PR:Q8VZ52"/>
<dbReference type="Proteomes" id="UP000006548">
    <property type="component" value="Chromosome 3"/>
</dbReference>
<dbReference type="ExpressionAtlas" id="Q8VZ52">
    <property type="expression patterns" value="baseline and differential"/>
</dbReference>
<dbReference type="GO" id="GO:0016020">
    <property type="term" value="C:membrane"/>
    <property type="evidence" value="ECO:0007669"/>
    <property type="project" value="UniProtKB-SubCell"/>
</dbReference>
<dbReference type="GO" id="GO:0004839">
    <property type="term" value="F:ubiquitin activating enzyme activity"/>
    <property type="evidence" value="ECO:0000315"/>
    <property type="project" value="TAIR"/>
</dbReference>
<dbReference type="GO" id="GO:0019787">
    <property type="term" value="F:ubiquitin-like protein transferase activity"/>
    <property type="evidence" value="ECO:0007669"/>
    <property type="project" value="InterPro"/>
</dbReference>
<dbReference type="GO" id="GO:0006914">
    <property type="term" value="P:autophagy"/>
    <property type="evidence" value="ECO:0000315"/>
    <property type="project" value="TAIR"/>
</dbReference>
<dbReference type="GO" id="GO:0043482">
    <property type="term" value="P:cellular pigment accumulation"/>
    <property type="evidence" value="ECO:0000315"/>
    <property type="project" value="UniProtKB"/>
</dbReference>
<dbReference type="GO" id="GO:0006995">
    <property type="term" value="P:cellular response to nitrogen starvation"/>
    <property type="evidence" value="ECO:0000315"/>
    <property type="project" value="UniProtKB"/>
</dbReference>
<dbReference type="GO" id="GO:0042742">
    <property type="term" value="P:defense response to bacterium"/>
    <property type="evidence" value="ECO:0000315"/>
    <property type="project" value="UniProtKB"/>
</dbReference>
<dbReference type="GO" id="GO:0050832">
    <property type="term" value="P:defense response to fungus"/>
    <property type="evidence" value="ECO:0000315"/>
    <property type="project" value="UniProtKB"/>
</dbReference>
<dbReference type="GO" id="GO:2000786">
    <property type="term" value="P:positive regulation of autophagosome assembly"/>
    <property type="evidence" value="ECO:0000315"/>
    <property type="project" value="UniProtKB"/>
</dbReference>
<dbReference type="GO" id="GO:0090549">
    <property type="term" value="P:response to carbon starvation"/>
    <property type="evidence" value="ECO:0000315"/>
    <property type="project" value="UniProtKB"/>
</dbReference>
<dbReference type="FunFam" id="3.30.1460.50:FF:000005">
    <property type="entry name" value="Ubiquitin-like-conjugating enzyme ATG10"/>
    <property type="match status" value="1"/>
</dbReference>
<dbReference type="Gene3D" id="3.30.1460.50">
    <property type="match status" value="1"/>
</dbReference>
<dbReference type="InterPro" id="IPR007135">
    <property type="entry name" value="Atg3/Atg10"/>
</dbReference>
<dbReference type="PANTHER" id="PTHR14957">
    <property type="entry name" value="UBIQUITIN-LIKE-CONJUGATING ENZYME ATG10"/>
    <property type="match status" value="1"/>
</dbReference>
<dbReference type="PANTHER" id="PTHR14957:SF1">
    <property type="entry name" value="UBIQUITIN-LIKE-CONJUGATING ENZYME ATG10"/>
    <property type="match status" value="1"/>
</dbReference>
<dbReference type="Pfam" id="PF03987">
    <property type="entry name" value="Autophagy_act_C"/>
    <property type="match status" value="1"/>
</dbReference>
<accession>Q8VZ52</accession>
<accession>F4JEH1</accession>